<reference key="1">
    <citation type="journal article" date="2007" name="J. Bacteriol.">
        <title>The complete genome sequence of the lactic acid bacterial paradigm Lactococcus lactis subsp. cremoris MG1363.</title>
        <authorList>
            <person name="Wegmann U."/>
            <person name="O'Connell-Motherway M."/>
            <person name="Zomer A."/>
            <person name="Buist G."/>
            <person name="Shearman C."/>
            <person name="Canchaya C."/>
            <person name="Ventura M."/>
            <person name="Goesmann A."/>
            <person name="Gasson M.J."/>
            <person name="Kuipers O.P."/>
            <person name="van Sinderen D."/>
            <person name="Kok J."/>
        </authorList>
    </citation>
    <scope>NUCLEOTIDE SEQUENCE [LARGE SCALE GENOMIC DNA]</scope>
    <source>
        <strain>MG1363</strain>
    </source>
</reference>
<reference key="2">
    <citation type="journal article" date="2010" name="Microbiology">
        <title>Two nucleoside transporters in Lactococcus lactis with different substrate specificities.</title>
        <authorList>
            <person name="Martinussen J."/>
            <person name="Soerensen C."/>
            <person name="Jendresen C.B."/>
            <person name="Kilstrup M."/>
        </authorList>
    </citation>
    <scope>FUNCTION</scope>
    <scope>SUBUNIT</scope>
    <scope>INDUCTION</scope>
    <source>
        <strain>MG1363</strain>
    </source>
</reference>
<name>NUPB_LACLM</name>
<protein>
    <recommendedName>
        <fullName evidence="4">Nucleoside ABC transporter permease protein NupB</fullName>
    </recommendedName>
</protein>
<organism>
    <name type="scientific">Lactococcus lactis subsp. cremoris (strain MG1363)</name>
    <dbReference type="NCBI Taxonomy" id="416870"/>
    <lineage>
        <taxon>Bacteria</taxon>
        <taxon>Bacillati</taxon>
        <taxon>Bacillota</taxon>
        <taxon>Bacilli</taxon>
        <taxon>Lactobacillales</taxon>
        <taxon>Streptococcaceae</taxon>
        <taxon>Lactococcus</taxon>
        <taxon>Lactococcus cremoris subsp. cremoris</taxon>
    </lineage>
</organism>
<evidence type="ECO:0000255" key="1"/>
<evidence type="ECO:0000269" key="2">
    <source>
    </source>
</evidence>
<evidence type="ECO:0000303" key="3">
    <source>
    </source>
</evidence>
<evidence type="ECO:0000305" key="4"/>
<evidence type="ECO:0000305" key="5">
    <source>
    </source>
</evidence>
<evidence type="ECO:0000312" key="6">
    <source>
        <dbReference type="EMBL" id="CAL97716.1"/>
    </source>
</evidence>
<feature type="chain" id="PRO_0000449274" description="Nucleoside ABC transporter permease protein NupB">
    <location>
        <begin position="1"/>
        <end position="364"/>
    </location>
</feature>
<feature type="transmembrane region" description="Helical" evidence="1">
    <location>
        <begin position="9"/>
        <end position="29"/>
    </location>
</feature>
<feature type="transmembrane region" description="Helical" evidence="1">
    <location>
        <begin position="77"/>
        <end position="99"/>
    </location>
</feature>
<feature type="transmembrane region" description="Helical" evidence="1">
    <location>
        <begin position="105"/>
        <end position="125"/>
    </location>
</feature>
<feature type="transmembrane region" description="Helical" evidence="1">
    <location>
        <begin position="138"/>
        <end position="158"/>
    </location>
</feature>
<feature type="transmembrane region" description="Helical" evidence="1">
    <location>
        <begin position="195"/>
        <end position="215"/>
    </location>
</feature>
<feature type="transmembrane region" description="Helical" evidence="1">
    <location>
        <begin position="244"/>
        <end position="264"/>
    </location>
</feature>
<feature type="transmembrane region" description="Helical" evidence="1">
    <location>
        <begin position="284"/>
        <end position="304"/>
    </location>
</feature>
<feature type="transmembrane region" description="Helical" evidence="1">
    <location>
        <begin position="326"/>
        <end position="346"/>
    </location>
</feature>
<sequence length="364" mass="38876">MNNKTRKVLVPLIAIVFGFLLGAIIMLAFGYNPIWGYEDLFISALGSARSIGETLQTMGPLILTALSFAVAMKVGLFNIGMSGQALAGWISSMWFALSFPDIPRLLMIPLVVIIGMVFGAFMGFIPGILRALLGTSEVITTIMLNYIMLFFSTFMIHSMFQKNILMDNTTDQTKLISANASFRTNWMSSLTDNSTLNIGLIIAIIALVIMAIIFTKTTLGFEIKAVGLNPDASEYAGISAKRTLILSMVVAGALAGLGGVVYGFGYMQNFVSQSASLDIGFYGMAVALLGGNSPIGILFAALLFSVLQTGAPGMTNDGIPPEIVKVVTAAIIFFIAVKFIIEVMLPKAKAIKASEATKKKGEKA</sequence>
<dbReference type="EMBL" id="AM406671">
    <property type="protein sequence ID" value="CAL97716.1"/>
    <property type="molecule type" value="Genomic_DNA"/>
</dbReference>
<dbReference type="RefSeq" id="WP_011835027.1">
    <property type="nucleotide sequence ID" value="NC_009004.1"/>
</dbReference>
<dbReference type="STRING" id="416870.llmg_1122"/>
<dbReference type="TCDB" id="3.A.1.2.17">
    <property type="family name" value="the atp-binding cassette (abc) superfamily"/>
</dbReference>
<dbReference type="KEGG" id="llm:llmg_1122"/>
<dbReference type="eggNOG" id="COG4603">
    <property type="taxonomic scope" value="Bacteria"/>
</dbReference>
<dbReference type="HOGENOM" id="CLU_040769_0_1_9"/>
<dbReference type="OrthoDB" id="45037at2"/>
<dbReference type="PhylomeDB" id="A2RKA6"/>
<dbReference type="Proteomes" id="UP000000364">
    <property type="component" value="Chromosome"/>
</dbReference>
<dbReference type="GO" id="GO:0005886">
    <property type="term" value="C:plasma membrane"/>
    <property type="evidence" value="ECO:0007669"/>
    <property type="project" value="UniProtKB-SubCell"/>
</dbReference>
<dbReference type="GO" id="GO:0022857">
    <property type="term" value="F:transmembrane transporter activity"/>
    <property type="evidence" value="ECO:0007669"/>
    <property type="project" value="InterPro"/>
</dbReference>
<dbReference type="CDD" id="cd06580">
    <property type="entry name" value="TM_PBP1_transp_TpRbsC_like"/>
    <property type="match status" value="1"/>
</dbReference>
<dbReference type="InterPro" id="IPR001851">
    <property type="entry name" value="ABC_transp_permease"/>
</dbReference>
<dbReference type="PANTHER" id="PTHR47089">
    <property type="entry name" value="ABC TRANSPORTER, PERMEASE PROTEIN"/>
    <property type="match status" value="1"/>
</dbReference>
<dbReference type="PANTHER" id="PTHR47089:SF1">
    <property type="entry name" value="GUANOSINE ABC TRANSPORTER PERMEASE PROTEIN NUPP"/>
    <property type="match status" value="1"/>
</dbReference>
<dbReference type="Pfam" id="PF02653">
    <property type="entry name" value="BPD_transp_2"/>
    <property type="match status" value="1"/>
</dbReference>
<comment type="function">
    <text evidence="2 4">Part of an ABC transporter complex involved in the uptake of all common nucleosides (PubMed:20595258). Responsible for the translocation of the substrate across the membrane (Probable).</text>
</comment>
<comment type="subunit">
    <text evidence="5">The complex is composed of two ATP-binding proteins (NupA), two transmembrane proteins (NupB and NupC) and a solute-binding protein (BmpA).</text>
</comment>
<comment type="subcellular location">
    <subcellularLocation>
        <location evidence="4">Cell membrane</location>
        <topology evidence="1">Multi-pass membrane protein</topology>
    </subcellularLocation>
</comment>
<comment type="induction">
    <text evidence="2">Constitutively expressed.</text>
</comment>
<comment type="similarity">
    <text evidence="4">Belongs to the binding-protein-dependent transport system permease family.</text>
</comment>
<accession>A2RKA6</accession>
<keyword id="KW-1003">Cell membrane</keyword>
<keyword id="KW-0472">Membrane</keyword>
<keyword id="KW-0812">Transmembrane</keyword>
<keyword id="KW-1133">Transmembrane helix</keyword>
<keyword id="KW-0813">Transport</keyword>
<proteinExistence type="evidence at protein level"/>
<gene>
    <name evidence="3" type="primary">nupB</name>
    <name evidence="6" type="ordered locus">llmg_1122</name>
</gene>